<keyword id="KW-0963">Cytoplasm</keyword>
<keyword id="KW-0274">FAD</keyword>
<keyword id="KW-0285">Flavoprotein</keyword>
<keyword id="KW-0489">Methyltransferase</keyword>
<keyword id="KW-0520">NAD</keyword>
<keyword id="KW-0521">NADP</keyword>
<keyword id="KW-0808">Transferase</keyword>
<keyword id="KW-0819">tRNA processing</keyword>
<reference key="1">
    <citation type="journal article" date="2009" name="J. Bacteriol.">
        <title>Complete genome sequence of Rhodobacter sphaeroides KD131.</title>
        <authorList>
            <person name="Lim S.-K."/>
            <person name="Kim S.J."/>
            <person name="Cha S.H."/>
            <person name="Oh Y.-K."/>
            <person name="Rhee H.-J."/>
            <person name="Kim M.-S."/>
            <person name="Lee J.K."/>
        </authorList>
    </citation>
    <scope>NUCLEOTIDE SEQUENCE [LARGE SCALE GENOMIC DNA]</scope>
    <source>
        <strain>KD131 / KCTC 12085</strain>
    </source>
</reference>
<gene>
    <name evidence="1" type="primary">trmFO</name>
    <name type="ordered locus">RSKD131_0940</name>
</gene>
<accession>B9KRK8</accession>
<organism>
    <name type="scientific">Cereibacter sphaeroides (strain KD131 / KCTC 12085)</name>
    <name type="common">Rhodobacter sphaeroides</name>
    <dbReference type="NCBI Taxonomy" id="557760"/>
    <lineage>
        <taxon>Bacteria</taxon>
        <taxon>Pseudomonadati</taxon>
        <taxon>Pseudomonadota</taxon>
        <taxon>Alphaproteobacteria</taxon>
        <taxon>Rhodobacterales</taxon>
        <taxon>Paracoccaceae</taxon>
        <taxon>Cereibacter</taxon>
    </lineage>
</organism>
<protein>
    <recommendedName>
        <fullName evidence="1">Methylenetetrahydrofolate--tRNA-(uracil-5-)-methyltransferase TrmFO</fullName>
        <ecNumber evidence="1">2.1.1.74</ecNumber>
    </recommendedName>
    <alternativeName>
        <fullName evidence="1">Folate-dependent tRNA (uracil-5-)-methyltransferase</fullName>
    </alternativeName>
    <alternativeName>
        <fullName evidence="1">Folate-dependent tRNA(M-5-U54)-methyltransferase</fullName>
    </alternativeName>
</protein>
<proteinExistence type="inferred from homology"/>
<sequence length="444" mass="48450">MAESLHIVGAGMAGSEAAWQAAEMGVPVVLHEMRPKVGTFAHRTGQFAEMVCSNSFRSDDDERNAVGLLHWEMRAARGLIMEMAAAHRLPAGGALAVDRDPFAESVTARLRAHPLISVVEEEVAELPSSGNWIVATGPLTSSALAESLRALTGAEALAFFDAIAPIVYAETIDMEVAWRQSRYDKGETEDERTAYINCPMNREQYEAFIDALLAAEKTEFHEGETAGYFDGCLPIEVMAERGRETLRHGPMKPVGLTNAHRPEEKAYAVVQLRRDNKLGTLYNIVGFQTKMKYGAQTAVFKMIPGLENASFARLGGIHRNTFLNSPTLLDDRMRLKLRPNIRFAGQVTGVEGYVESAAMGLLAGRMAAAEILGRDLPPPPPETAMGALVTHITGGAEAKSFQPMNVNFGLFPPIDARGGRRGRKDRYKAYTDRAKAAFTEWLGA</sequence>
<name>TRMFO_CERSK</name>
<evidence type="ECO:0000255" key="1">
    <source>
        <dbReference type="HAMAP-Rule" id="MF_01037"/>
    </source>
</evidence>
<feature type="chain" id="PRO_1000213384" description="Methylenetetrahydrofolate--tRNA-(uracil-5-)-methyltransferase TrmFO">
    <location>
        <begin position="1"/>
        <end position="444"/>
    </location>
</feature>
<feature type="binding site" evidence="1">
    <location>
        <begin position="9"/>
        <end position="14"/>
    </location>
    <ligand>
        <name>FAD</name>
        <dbReference type="ChEBI" id="CHEBI:57692"/>
    </ligand>
</feature>
<dbReference type="EC" id="2.1.1.74" evidence="1"/>
<dbReference type="EMBL" id="CP001150">
    <property type="protein sequence ID" value="ACM00800.1"/>
    <property type="molecule type" value="Genomic_DNA"/>
</dbReference>
<dbReference type="RefSeq" id="WP_015920409.1">
    <property type="nucleotide sequence ID" value="NC_011963.1"/>
</dbReference>
<dbReference type="SMR" id="B9KRK8"/>
<dbReference type="GeneID" id="67446379"/>
<dbReference type="KEGG" id="rsk:RSKD131_0940"/>
<dbReference type="HOGENOM" id="CLU_033057_1_0_5"/>
<dbReference type="GO" id="GO:0005829">
    <property type="term" value="C:cytosol"/>
    <property type="evidence" value="ECO:0007669"/>
    <property type="project" value="TreeGrafter"/>
</dbReference>
<dbReference type="GO" id="GO:0050660">
    <property type="term" value="F:flavin adenine dinucleotide binding"/>
    <property type="evidence" value="ECO:0007669"/>
    <property type="project" value="UniProtKB-UniRule"/>
</dbReference>
<dbReference type="GO" id="GO:0047151">
    <property type="term" value="F:tRNA (uracil(54)-C5)-methyltransferase activity, 5,10-methylenetetrahydrofolate-dependent"/>
    <property type="evidence" value="ECO:0007669"/>
    <property type="project" value="UniProtKB-UniRule"/>
</dbReference>
<dbReference type="GO" id="GO:0030488">
    <property type="term" value="P:tRNA methylation"/>
    <property type="evidence" value="ECO:0007669"/>
    <property type="project" value="TreeGrafter"/>
</dbReference>
<dbReference type="GO" id="GO:0002098">
    <property type="term" value="P:tRNA wobble uridine modification"/>
    <property type="evidence" value="ECO:0007669"/>
    <property type="project" value="TreeGrafter"/>
</dbReference>
<dbReference type="Gene3D" id="3.50.50.60">
    <property type="entry name" value="FAD/NAD(P)-binding domain"/>
    <property type="match status" value="2"/>
</dbReference>
<dbReference type="HAMAP" id="MF_01037">
    <property type="entry name" value="TrmFO"/>
    <property type="match status" value="1"/>
</dbReference>
<dbReference type="InterPro" id="IPR036188">
    <property type="entry name" value="FAD/NAD-bd_sf"/>
</dbReference>
<dbReference type="InterPro" id="IPR002218">
    <property type="entry name" value="MnmG-rel"/>
</dbReference>
<dbReference type="InterPro" id="IPR020595">
    <property type="entry name" value="MnmG-rel_CS"/>
</dbReference>
<dbReference type="InterPro" id="IPR040131">
    <property type="entry name" value="MnmG_N"/>
</dbReference>
<dbReference type="InterPro" id="IPR004417">
    <property type="entry name" value="TrmFO"/>
</dbReference>
<dbReference type="NCBIfam" id="TIGR00137">
    <property type="entry name" value="gid_trmFO"/>
    <property type="match status" value="1"/>
</dbReference>
<dbReference type="NCBIfam" id="NF003739">
    <property type="entry name" value="PRK05335.1"/>
    <property type="match status" value="1"/>
</dbReference>
<dbReference type="PANTHER" id="PTHR11806">
    <property type="entry name" value="GLUCOSE INHIBITED DIVISION PROTEIN A"/>
    <property type="match status" value="1"/>
</dbReference>
<dbReference type="PANTHER" id="PTHR11806:SF2">
    <property type="entry name" value="METHYLENETETRAHYDROFOLATE--TRNA-(URACIL-5-)-METHYLTRANSFERASE TRMFO"/>
    <property type="match status" value="1"/>
</dbReference>
<dbReference type="Pfam" id="PF01134">
    <property type="entry name" value="GIDA"/>
    <property type="match status" value="1"/>
</dbReference>
<dbReference type="SUPFAM" id="SSF51905">
    <property type="entry name" value="FAD/NAD(P)-binding domain"/>
    <property type="match status" value="1"/>
</dbReference>
<dbReference type="PROSITE" id="PS01281">
    <property type="entry name" value="GIDA_2"/>
    <property type="match status" value="1"/>
</dbReference>
<comment type="function">
    <text evidence="1">Catalyzes the folate-dependent formation of 5-methyl-uridine at position 54 (M-5-U54) in all tRNAs.</text>
</comment>
<comment type="catalytic activity">
    <reaction evidence="1">
        <text>uridine(54) in tRNA + (6R)-5,10-methylene-5,6,7,8-tetrahydrofolate + NADH + H(+) = 5-methyluridine(54) in tRNA + (6S)-5,6,7,8-tetrahydrofolate + NAD(+)</text>
        <dbReference type="Rhea" id="RHEA:16873"/>
        <dbReference type="Rhea" id="RHEA-COMP:10167"/>
        <dbReference type="Rhea" id="RHEA-COMP:10193"/>
        <dbReference type="ChEBI" id="CHEBI:15378"/>
        <dbReference type="ChEBI" id="CHEBI:15636"/>
        <dbReference type="ChEBI" id="CHEBI:57453"/>
        <dbReference type="ChEBI" id="CHEBI:57540"/>
        <dbReference type="ChEBI" id="CHEBI:57945"/>
        <dbReference type="ChEBI" id="CHEBI:65315"/>
        <dbReference type="ChEBI" id="CHEBI:74447"/>
        <dbReference type="EC" id="2.1.1.74"/>
    </reaction>
</comment>
<comment type="catalytic activity">
    <reaction evidence="1">
        <text>uridine(54) in tRNA + (6R)-5,10-methylene-5,6,7,8-tetrahydrofolate + NADPH + H(+) = 5-methyluridine(54) in tRNA + (6S)-5,6,7,8-tetrahydrofolate + NADP(+)</text>
        <dbReference type="Rhea" id="RHEA:62372"/>
        <dbReference type="Rhea" id="RHEA-COMP:10167"/>
        <dbReference type="Rhea" id="RHEA-COMP:10193"/>
        <dbReference type="ChEBI" id="CHEBI:15378"/>
        <dbReference type="ChEBI" id="CHEBI:15636"/>
        <dbReference type="ChEBI" id="CHEBI:57453"/>
        <dbReference type="ChEBI" id="CHEBI:57783"/>
        <dbReference type="ChEBI" id="CHEBI:58349"/>
        <dbReference type="ChEBI" id="CHEBI:65315"/>
        <dbReference type="ChEBI" id="CHEBI:74447"/>
        <dbReference type="EC" id="2.1.1.74"/>
    </reaction>
</comment>
<comment type="cofactor">
    <cofactor evidence="1">
        <name>FAD</name>
        <dbReference type="ChEBI" id="CHEBI:57692"/>
    </cofactor>
</comment>
<comment type="subcellular location">
    <subcellularLocation>
        <location evidence="1">Cytoplasm</location>
    </subcellularLocation>
</comment>
<comment type="similarity">
    <text evidence="1">Belongs to the MnmG family. TrmFO subfamily.</text>
</comment>